<reference key="1">
    <citation type="submission" date="2004-04" db="EMBL/GenBank/DDBJ databases">
        <title>Cloning, expression pattern and homology modeling of novel rat RAB genes.</title>
        <authorList>
            <person name="Zhong C."/>
            <person name="Zhou G."/>
            <person name="Ji G."/>
            <person name="Yu L."/>
        </authorList>
    </citation>
    <scope>NUCLEOTIDE SEQUENCE [MRNA]</scope>
    <source>
        <strain>Sprague-Dawley</strain>
    </source>
</reference>
<dbReference type="EMBL" id="AY593256">
    <property type="protein sequence ID" value="AAT86135.1"/>
    <property type="molecule type" value="mRNA"/>
</dbReference>
<dbReference type="RefSeq" id="NP_001019502.1">
    <property type="nucleotide sequence ID" value="NM_001024331.2"/>
</dbReference>
<dbReference type="SMR" id="Q53B90"/>
<dbReference type="FunCoup" id="Q53B90">
    <property type="interactions" value="328"/>
</dbReference>
<dbReference type="STRING" id="10116.ENSRNOP00000013299"/>
<dbReference type="PhosphoSitePlus" id="Q53B90"/>
<dbReference type="jPOST" id="Q53B90"/>
<dbReference type="PaxDb" id="10116-ENSRNOP00000013299"/>
<dbReference type="Ensembl" id="ENSRNOT00000013299.5">
    <property type="protein sequence ID" value="ENSRNOP00000013299.4"/>
    <property type="gene ID" value="ENSRNOG00000037768.3"/>
</dbReference>
<dbReference type="GeneID" id="500249"/>
<dbReference type="KEGG" id="rno:500249"/>
<dbReference type="UCSC" id="RGD:1565300">
    <property type="organism name" value="rat"/>
</dbReference>
<dbReference type="AGR" id="RGD:1565300"/>
<dbReference type="CTD" id="339122"/>
<dbReference type="RGD" id="1565300">
    <property type="gene designation" value="Rab43"/>
</dbReference>
<dbReference type="eggNOG" id="KOG0084">
    <property type="taxonomic scope" value="Eukaryota"/>
</dbReference>
<dbReference type="GeneTree" id="ENSGT00940000161980"/>
<dbReference type="HOGENOM" id="CLU_041217_23_1_1"/>
<dbReference type="InParanoid" id="Q53B90"/>
<dbReference type="OMA" id="FIERHGN"/>
<dbReference type="OrthoDB" id="9989112at2759"/>
<dbReference type="PhylomeDB" id="Q53B90"/>
<dbReference type="TreeFam" id="TF300097"/>
<dbReference type="Reactome" id="R-RNO-6811440">
    <property type="pathway name" value="Retrograde transport at the Trans-Golgi-Network"/>
</dbReference>
<dbReference type="Reactome" id="R-RNO-8873719">
    <property type="pathway name" value="RAB geranylgeranylation"/>
</dbReference>
<dbReference type="PRO" id="PR:Q53B90"/>
<dbReference type="Proteomes" id="UP000002494">
    <property type="component" value="Chromosome 4"/>
</dbReference>
<dbReference type="Bgee" id="ENSRNOG00000037768">
    <property type="expression patterns" value="Expressed in liver and 18 other cell types or tissues"/>
</dbReference>
<dbReference type="GO" id="GO:0012505">
    <property type="term" value="C:endomembrane system"/>
    <property type="evidence" value="ECO:0000318"/>
    <property type="project" value="GO_Central"/>
</dbReference>
<dbReference type="GO" id="GO:0005794">
    <property type="term" value="C:Golgi apparatus"/>
    <property type="evidence" value="ECO:0000250"/>
    <property type="project" value="UniProtKB"/>
</dbReference>
<dbReference type="GO" id="GO:0045335">
    <property type="term" value="C:phagocytic vesicle"/>
    <property type="evidence" value="ECO:0000250"/>
    <property type="project" value="UniProtKB"/>
</dbReference>
<dbReference type="GO" id="GO:0030670">
    <property type="term" value="C:phagocytic vesicle membrane"/>
    <property type="evidence" value="ECO:0007669"/>
    <property type="project" value="UniProtKB-SubCell"/>
</dbReference>
<dbReference type="GO" id="GO:0030672">
    <property type="term" value="C:synaptic vesicle membrane"/>
    <property type="evidence" value="ECO:0007669"/>
    <property type="project" value="UniProtKB-ARBA"/>
</dbReference>
<dbReference type="GO" id="GO:0005525">
    <property type="term" value="F:GTP binding"/>
    <property type="evidence" value="ECO:0007669"/>
    <property type="project" value="UniProtKB-KW"/>
</dbReference>
<dbReference type="GO" id="GO:0003924">
    <property type="term" value="F:GTPase activity"/>
    <property type="evidence" value="ECO:0000250"/>
    <property type="project" value="UniProtKB"/>
</dbReference>
<dbReference type="GO" id="GO:0000045">
    <property type="term" value="P:autophagosome assembly"/>
    <property type="evidence" value="ECO:0000318"/>
    <property type="project" value="GO_Central"/>
</dbReference>
<dbReference type="GO" id="GO:0071346">
    <property type="term" value="P:cellular response to type II interferon"/>
    <property type="evidence" value="ECO:0000266"/>
    <property type="project" value="RGD"/>
</dbReference>
<dbReference type="GO" id="GO:0007030">
    <property type="term" value="P:Golgi organization"/>
    <property type="evidence" value="ECO:0000250"/>
    <property type="project" value="UniProtKB"/>
</dbReference>
<dbReference type="GO" id="GO:0006886">
    <property type="term" value="P:intracellular protein transport"/>
    <property type="evidence" value="ECO:0000318"/>
    <property type="project" value="GO_Central"/>
</dbReference>
<dbReference type="GO" id="GO:0090382">
    <property type="term" value="P:phagosome maturation"/>
    <property type="evidence" value="ECO:0000250"/>
    <property type="project" value="UniProtKB"/>
</dbReference>
<dbReference type="GO" id="GO:0035526">
    <property type="term" value="P:retrograde transport, plasma membrane to Golgi"/>
    <property type="evidence" value="ECO:0000250"/>
    <property type="project" value="UniProtKB"/>
</dbReference>
<dbReference type="CDD" id="cd01864">
    <property type="entry name" value="Rab19"/>
    <property type="match status" value="1"/>
</dbReference>
<dbReference type="FunFam" id="3.40.50.300:FF:000803">
    <property type="entry name" value="Ras-related protein Rab-43"/>
    <property type="match status" value="1"/>
</dbReference>
<dbReference type="Gene3D" id="3.40.50.300">
    <property type="entry name" value="P-loop containing nucleotide triphosphate hydrolases"/>
    <property type="match status" value="1"/>
</dbReference>
<dbReference type="InterPro" id="IPR027417">
    <property type="entry name" value="P-loop_NTPase"/>
</dbReference>
<dbReference type="InterPro" id="IPR048040">
    <property type="entry name" value="Rab19/43"/>
</dbReference>
<dbReference type="InterPro" id="IPR050209">
    <property type="entry name" value="Rab_GTPases_membrane_traffic"/>
</dbReference>
<dbReference type="InterPro" id="IPR005225">
    <property type="entry name" value="Small_GTP-bd"/>
</dbReference>
<dbReference type="InterPro" id="IPR001806">
    <property type="entry name" value="Small_GTPase"/>
</dbReference>
<dbReference type="NCBIfam" id="TIGR00231">
    <property type="entry name" value="small_GTP"/>
    <property type="match status" value="1"/>
</dbReference>
<dbReference type="PANTHER" id="PTHR47979">
    <property type="entry name" value="DRAB11-RELATED"/>
    <property type="match status" value="1"/>
</dbReference>
<dbReference type="Pfam" id="PF00071">
    <property type="entry name" value="Ras"/>
    <property type="match status" value="1"/>
</dbReference>
<dbReference type="PRINTS" id="PR00449">
    <property type="entry name" value="RASTRNSFRMNG"/>
</dbReference>
<dbReference type="SMART" id="SM00175">
    <property type="entry name" value="RAB"/>
    <property type="match status" value="1"/>
</dbReference>
<dbReference type="SMART" id="SM00176">
    <property type="entry name" value="RAN"/>
    <property type="match status" value="1"/>
</dbReference>
<dbReference type="SMART" id="SM00173">
    <property type="entry name" value="RAS"/>
    <property type="match status" value="1"/>
</dbReference>
<dbReference type="SMART" id="SM00174">
    <property type="entry name" value="RHO"/>
    <property type="match status" value="1"/>
</dbReference>
<dbReference type="SUPFAM" id="SSF52540">
    <property type="entry name" value="P-loop containing nucleoside triphosphate hydrolases"/>
    <property type="match status" value="1"/>
</dbReference>
<dbReference type="PROSITE" id="PS51419">
    <property type="entry name" value="RAB"/>
    <property type="match status" value="1"/>
</dbReference>
<comment type="function">
    <text>The small GTPases Rab are key regulators of intracellular membrane trafficking, from the formation of transport vesicles to their fusion with membranes. Rabs cycle between an inactive GDP-bound form and an active GTP-bound form that is able to recruit to membranes different set of downstream effectors directly responsible for vesicle formation, movement, tethering and fusion. The low intrinsic GTPase activity of RAB43 is activated by USP6NL. Involved in retrograde transport from the endocytic pathway to the Golgi apparatus. Involved in the transport of Shiga toxin from early and recycling endosomes to the trans-Golgi network. Required for the structural integrity of the Golgi complex. Plays a role in the maturation of phagosomes that engulf pathogens, such as S.aureus and Mycobacterium.</text>
</comment>
<comment type="subunit">
    <text evidence="2">Interacts with GDI1, GDI2 and CHM; phosphorylation at Thr-80 disrupts these interactions.</text>
</comment>
<comment type="subcellular location">
    <subcellularLocation>
        <location evidence="2">Cytoplasmic vesicle</location>
        <location evidence="2">Phagosome</location>
    </subcellularLocation>
    <subcellularLocation>
        <location evidence="4">Cytoplasmic vesicle</location>
        <location evidence="4">Phagosome membrane</location>
        <topology evidence="4">Lipid-anchor</topology>
        <orientation evidence="4">Cytoplasmic side</orientation>
    </subcellularLocation>
    <subcellularLocation>
        <location evidence="2">Golgi apparatus</location>
    </subcellularLocation>
    <subcellularLocation>
        <location evidence="4">Golgi apparatus</location>
        <location evidence="4">trans-Golgi network membrane</location>
        <topology evidence="4">Lipid-anchor</topology>
    </subcellularLocation>
    <subcellularLocation>
        <location evidence="2">Golgi apparatus</location>
        <location evidence="2">trans-Golgi network</location>
    </subcellularLocation>
    <text evidence="2">Recruited to phagosomes containing S.aureus or M.tuberculosis.</text>
</comment>
<comment type="similarity">
    <text evidence="4">Belongs to the small GTPase superfamily. Rab family.</text>
</comment>
<gene>
    <name type="primary">Rab43</name>
</gene>
<feature type="chain" id="PRO_0000244617" description="Ras-related protein Rab-43">
    <location>
        <begin position="1"/>
        <end position="210"/>
    </location>
</feature>
<feature type="short sequence motif" description="Effector region" evidence="1">
    <location>
        <begin position="45"/>
        <end position="53"/>
    </location>
</feature>
<feature type="binding site" evidence="1">
    <location>
        <begin position="23"/>
        <end position="30"/>
    </location>
    <ligand>
        <name>GTP</name>
        <dbReference type="ChEBI" id="CHEBI:37565"/>
    </ligand>
</feature>
<feature type="binding site" evidence="1">
    <location>
        <begin position="71"/>
        <end position="75"/>
    </location>
    <ligand>
        <name>GTP</name>
        <dbReference type="ChEBI" id="CHEBI:37565"/>
    </ligand>
</feature>
<feature type="binding site" evidence="1">
    <location>
        <begin position="129"/>
        <end position="132"/>
    </location>
    <ligand>
        <name>GTP</name>
        <dbReference type="ChEBI" id="CHEBI:37565"/>
    </ligand>
</feature>
<feature type="binding site" evidence="1">
    <location>
        <begin position="161"/>
        <end position="162"/>
    </location>
    <ligand>
        <name>GTP</name>
        <dbReference type="ChEBI" id="CHEBI:37565"/>
    </ligand>
</feature>
<feature type="modified residue" description="Phosphoserine" evidence="3">
    <location>
        <position position="47"/>
    </location>
</feature>
<feature type="modified residue" description="Phosphothreonine" evidence="2">
    <location>
        <position position="80"/>
    </location>
</feature>
<feature type="modified residue" description="Cysteine methyl ester" evidence="1">
    <location>
        <position position="210"/>
    </location>
</feature>
<feature type="lipid moiety-binding region" description="S-geranylgeranyl cysteine" evidence="1">
    <location>
        <position position="208"/>
    </location>
</feature>
<feature type="lipid moiety-binding region" description="S-geranylgeranyl cysteine" evidence="1">
    <location>
        <position position="210"/>
    </location>
</feature>
<sequence>MAGPGPGDQDEHYDFLFKLVLVGDASVGKTCVVQRFKTGAFSARQGSTIGVDFTMKTLEIQGKRVKLQIWDTAGQERFRTITQSYYRSANGAILAYDISKRSTFLSVPHWIEDVRKYAGSNIVQLLIGNKSDLADLREVPLAEAQSLAEHYDILCAIETSAKDSSNVEEAFTRVATELIMRHGGPMFSEKNTDHIQLDSKDIAESWGCGC</sequence>
<evidence type="ECO:0000250" key="1"/>
<evidence type="ECO:0000250" key="2">
    <source>
        <dbReference type="UniProtKB" id="Q86YS6"/>
    </source>
</evidence>
<evidence type="ECO:0000250" key="3">
    <source>
        <dbReference type="UniProtKB" id="Q8CG50"/>
    </source>
</evidence>
<evidence type="ECO:0000305" key="4"/>
<organism>
    <name type="scientific">Rattus norvegicus</name>
    <name type="common">Rat</name>
    <dbReference type="NCBI Taxonomy" id="10116"/>
    <lineage>
        <taxon>Eukaryota</taxon>
        <taxon>Metazoa</taxon>
        <taxon>Chordata</taxon>
        <taxon>Craniata</taxon>
        <taxon>Vertebrata</taxon>
        <taxon>Euteleostomi</taxon>
        <taxon>Mammalia</taxon>
        <taxon>Eutheria</taxon>
        <taxon>Euarchontoglires</taxon>
        <taxon>Glires</taxon>
        <taxon>Rodentia</taxon>
        <taxon>Myomorpha</taxon>
        <taxon>Muroidea</taxon>
        <taxon>Muridae</taxon>
        <taxon>Murinae</taxon>
        <taxon>Rattus</taxon>
    </lineage>
</organism>
<protein>
    <recommendedName>
        <fullName>Ras-related protein Rab-43</fullName>
    </recommendedName>
</protein>
<keyword id="KW-0968">Cytoplasmic vesicle</keyword>
<keyword id="KW-0333">Golgi apparatus</keyword>
<keyword id="KW-0342">GTP-binding</keyword>
<keyword id="KW-0449">Lipoprotein</keyword>
<keyword id="KW-0472">Membrane</keyword>
<keyword id="KW-0488">Methylation</keyword>
<keyword id="KW-0547">Nucleotide-binding</keyword>
<keyword id="KW-0597">Phosphoprotein</keyword>
<keyword id="KW-0636">Prenylation</keyword>
<keyword id="KW-1185">Reference proteome</keyword>
<name>RAB43_RAT</name>
<accession>Q53B90</accession>
<proteinExistence type="evidence at transcript level"/>